<sequence>MIGQRIKQYRKEKGYSLSELAEKAGVAKSYLSSIERNLQTNPSIQFLEKVSAVLDVSVHTLLNEKDETEYDGQLDSEWENLVRDAMASGVSKKQFREFLDYQKWKKRQEKE</sequence>
<reference key="1">
    <citation type="journal article" date="1990" name="J. Gen. Microbiol.">
        <title>Nucleotide sequences of the Bacillus subtilis flaD locus and a B. licheniformis homologue affecting the autolysin level and flagellation.</title>
        <authorList>
            <person name="Sekiguchi J."/>
            <person name="Ohsu H."/>
            <person name="Kuroda A."/>
            <person name="Moriyama H."/>
            <person name="Akamatsu T."/>
        </authorList>
    </citation>
    <scope>NUCLEOTIDE SEQUENCE [GENOMIC DNA]</scope>
    <source>
        <strain>FD0120</strain>
    </source>
</reference>
<evidence type="ECO:0000255" key="1">
    <source>
        <dbReference type="PROSITE-ProRule" id="PRU00257"/>
    </source>
</evidence>
<evidence type="ECO:0000255" key="2">
    <source>
        <dbReference type="PROSITE-ProRule" id="PRU00833"/>
    </source>
</evidence>
<gene>
    <name type="primary">sinR</name>
    <name type="synonym">flaL</name>
    <name type="synonym">sin</name>
</gene>
<accession>P22753</accession>
<dbReference type="EMBL" id="M60287">
    <property type="protein sequence ID" value="AAA22439.1"/>
    <property type="molecule type" value="Genomic_DNA"/>
</dbReference>
<dbReference type="PIR" id="B45824">
    <property type="entry name" value="B45824"/>
</dbReference>
<dbReference type="SMR" id="P22753"/>
<dbReference type="GO" id="GO:0005829">
    <property type="term" value="C:cytosol"/>
    <property type="evidence" value="ECO:0007669"/>
    <property type="project" value="TreeGrafter"/>
</dbReference>
<dbReference type="GO" id="GO:0003677">
    <property type="term" value="F:DNA binding"/>
    <property type="evidence" value="ECO:0007669"/>
    <property type="project" value="UniProtKB-KW"/>
</dbReference>
<dbReference type="GO" id="GO:0003700">
    <property type="term" value="F:DNA-binding transcription factor activity"/>
    <property type="evidence" value="ECO:0007669"/>
    <property type="project" value="TreeGrafter"/>
</dbReference>
<dbReference type="GO" id="GO:0046983">
    <property type="term" value="F:protein dimerization activity"/>
    <property type="evidence" value="ECO:0007669"/>
    <property type="project" value="InterPro"/>
</dbReference>
<dbReference type="GO" id="GO:0044781">
    <property type="term" value="P:bacterial-type flagellum organization"/>
    <property type="evidence" value="ECO:0007669"/>
    <property type="project" value="UniProtKB-KW"/>
</dbReference>
<dbReference type="CDD" id="cd00093">
    <property type="entry name" value="HTH_XRE"/>
    <property type="match status" value="1"/>
</dbReference>
<dbReference type="FunFam" id="1.10.260.40:FF:000024">
    <property type="entry name" value="Transcriptional regulator SinR"/>
    <property type="match status" value="1"/>
</dbReference>
<dbReference type="Gene3D" id="1.10.260.40">
    <property type="entry name" value="lambda repressor-like DNA-binding domains"/>
    <property type="match status" value="1"/>
</dbReference>
<dbReference type="InterPro" id="IPR050807">
    <property type="entry name" value="Bact_TransReg_Diox"/>
</dbReference>
<dbReference type="InterPro" id="IPR001387">
    <property type="entry name" value="Cro/C1-type_HTH"/>
</dbReference>
<dbReference type="InterPro" id="IPR010982">
    <property type="entry name" value="Lambda_DNA-bd_dom_sf"/>
</dbReference>
<dbReference type="InterPro" id="IPR010981">
    <property type="entry name" value="SinR/SinI_dimer_dom"/>
</dbReference>
<dbReference type="InterPro" id="IPR036281">
    <property type="entry name" value="SinR/SinI_dimer_dom_sf"/>
</dbReference>
<dbReference type="PANTHER" id="PTHR46797">
    <property type="entry name" value="HTH-TYPE TRANSCRIPTIONAL REGULATOR"/>
    <property type="match status" value="1"/>
</dbReference>
<dbReference type="PANTHER" id="PTHR46797:SF13">
    <property type="entry name" value="HTH-TYPE TRANSCRIPTIONAL REGULATOR SINR"/>
    <property type="match status" value="1"/>
</dbReference>
<dbReference type="Pfam" id="PF01381">
    <property type="entry name" value="HTH_3"/>
    <property type="match status" value="1"/>
</dbReference>
<dbReference type="Pfam" id="PF08671">
    <property type="entry name" value="SinI"/>
    <property type="match status" value="1"/>
</dbReference>
<dbReference type="SMART" id="SM00530">
    <property type="entry name" value="HTH_XRE"/>
    <property type="match status" value="1"/>
</dbReference>
<dbReference type="SUPFAM" id="SSF47413">
    <property type="entry name" value="lambda repressor-like DNA-binding domains"/>
    <property type="match status" value="1"/>
</dbReference>
<dbReference type="SUPFAM" id="SSF47406">
    <property type="entry name" value="SinR repressor dimerisation domain-like"/>
    <property type="match status" value="1"/>
</dbReference>
<dbReference type="PROSITE" id="PS50943">
    <property type="entry name" value="HTH_CROC1"/>
    <property type="match status" value="1"/>
</dbReference>
<dbReference type="PROSITE" id="PS51500">
    <property type="entry name" value="SIN"/>
    <property type="match status" value="1"/>
</dbReference>
<feature type="chain" id="PRO_0000149737" description="HTH-type transcriptional regulator SinR">
    <location>
        <begin position="1"/>
        <end position="111"/>
    </location>
</feature>
<feature type="domain" description="HTH cro/C1-type" evidence="1">
    <location>
        <begin position="6"/>
        <end position="61"/>
    </location>
</feature>
<feature type="domain" description="Sin" evidence="2">
    <location>
        <begin position="65"/>
        <end position="103"/>
    </location>
</feature>
<feature type="DNA-binding region" description="H-T-H motif" evidence="1">
    <location>
        <begin position="17"/>
        <end position="36"/>
    </location>
</feature>
<comment type="function">
    <text>Affects autolysin level and flagellation.</text>
</comment>
<comment type="subunit">
    <text>Homotetramer. Also associates with SinI.</text>
</comment>
<proteinExistence type="predicted"/>
<organism>
    <name type="scientific">Bacillus licheniformis</name>
    <dbReference type="NCBI Taxonomy" id="1402"/>
    <lineage>
        <taxon>Bacteria</taxon>
        <taxon>Bacillati</taxon>
        <taxon>Bacillota</taxon>
        <taxon>Bacilli</taxon>
        <taxon>Bacillales</taxon>
        <taxon>Bacillaceae</taxon>
        <taxon>Bacillus</taxon>
    </lineage>
</organism>
<keyword id="KW-0010">Activator</keyword>
<keyword id="KW-1005">Bacterial flagellum biogenesis</keyword>
<keyword id="KW-0238">DNA-binding</keyword>
<keyword id="KW-0678">Repressor</keyword>
<keyword id="KW-0804">Transcription</keyword>
<keyword id="KW-0805">Transcription regulation</keyword>
<name>SINR_BACLI</name>
<protein>
    <recommendedName>
        <fullName>HTH-type transcriptional regulator SinR</fullName>
    </recommendedName>
</protein>